<sequence length="190" mass="20669">MSENNGDNIELLSENDVARTIARIAHQIIEKTALDAPGTKPVLLLGIPSGGVPIASQIAQKIKEFTGVDVPVGSLDVTLYRDDLRKNPHRALQPTNLPLDGINGHHIILVDDVLYSGRTIRAALDALRDIGRPDIIQLAVLVDRGHRQLPIRADYVGKNLPTSRGEDVQVFIKEIDGRTAVVLTRGTEEA</sequence>
<organism>
    <name type="scientific">Corynebacterium diphtheriae (strain ATCC 700971 / NCTC 13129 / Biotype gravis)</name>
    <dbReference type="NCBI Taxonomy" id="257309"/>
    <lineage>
        <taxon>Bacteria</taxon>
        <taxon>Bacillati</taxon>
        <taxon>Actinomycetota</taxon>
        <taxon>Actinomycetes</taxon>
        <taxon>Mycobacteriales</taxon>
        <taxon>Corynebacteriaceae</taxon>
        <taxon>Corynebacterium</taxon>
    </lineage>
</organism>
<proteinExistence type="inferred from homology"/>
<accession>Q6NH12</accession>
<feature type="chain" id="PRO_1000053832" description="Bifunctional protein PyrR">
    <location>
        <begin position="1"/>
        <end position="190"/>
    </location>
</feature>
<feature type="short sequence motif" description="PRPP-binding" evidence="1">
    <location>
        <begin position="107"/>
        <end position="119"/>
    </location>
</feature>
<name>PYRR_CORDI</name>
<evidence type="ECO:0000255" key="1">
    <source>
        <dbReference type="HAMAP-Rule" id="MF_01219"/>
    </source>
</evidence>
<comment type="function">
    <text evidence="1">Regulates the transcription of the pyrimidine nucleotide (pyr) operon in response to exogenous pyrimidines.</text>
</comment>
<comment type="function">
    <text evidence="1">Also displays a weak uracil phosphoribosyltransferase activity which is not physiologically significant.</text>
</comment>
<comment type="catalytic activity">
    <reaction evidence="1">
        <text>UMP + diphosphate = 5-phospho-alpha-D-ribose 1-diphosphate + uracil</text>
        <dbReference type="Rhea" id="RHEA:13017"/>
        <dbReference type="ChEBI" id="CHEBI:17568"/>
        <dbReference type="ChEBI" id="CHEBI:33019"/>
        <dbReference type="ChEBI" id="CHEBI:57865"/>
        <dbReference type="ChEBI" id="CHEBI:58017"/>
        <dbReference type="EC" id="2.4.2.9"/>
    </reaction>
</comment>
<comment type="similarity">
    <text evidence="1">Belongs to the purine/pyrimidine phosphoribosyltransferase family. PyrR subfamily.</text>
</comment>
<protein>
    <recommendedName>
        <fullName evidence="1">Bifunctional protein PyrR</fullName>
    </recommendedName>
    <domain>
        <recommendedName>
            <fullName evidence="1">Pyrimidine operon regulatory protein</fullName>
        </recommendedName>
    </domain>
    <domain>
        <recommendedName>
            <fullName evidence="1">Uracil phosphoribosyltransferase</fullName>
            <shortName evidence="1">UPRTase</shortName>
            <ecNumber evidence="1">2.4.2.9</ecNumber>
        </recommendedName>
    </domain>
</protein>
<keyword id="KW-0328">Glycosyltransferase</keyword>
<keyword id="KW-1185">Reference proteome</keyword>
<keyword id="KW-0804">Transcription</keyword>
<keyword id="KW-0805">Transcription regulation</keyword>
<keyword id="KW-0808">Transferase</keyword>
<dbReference type="EC" id="2.4.2.9" evidence="1"/>
<dbReference type="EMBL" id="BX248357">
    <property type="protein sequence ID" value="CAE49863.1"/>
    <property type="molecule type" value="Genomic_DNA"/>
</dbReference>
<dbReference type="RefSeq" id="WP_003851650.1">
    <property type="nucleotide sequence ID" value="NC_002935.2"/>
</dbReference>
<dbReference type="SMR" id="Q6NH12"/>
<dbReference type="STRING" id="257309.DIP1335"/>
<dbReference type="KEGG" id="cdi:DIP1335"/>
<dbReference type="HOGENOM" id="CLU_094234_2_1_11"/>
<dbReference type="Proteomes" id="UP000002198">
    <property type="component" value="Chromosome"/>
</dbReference>
<dbReference type="GO" id="GO:0004845">
    <property type="term" value="F:uracil phosphoribosyltransferase activity"/>
    <property type="evidence" value="ECO:0007669"/>
    <property type="project" value="UniProtKB-UniRule"/>
</dbReference>
<dbReference type="GO" id="GO:0006355">
    <property type="term" value="P:regulation of DNA-templated transcription"/>
    <property type="evidence" value="ECO:0007669"/>
    <property type="project" value="UniProtKB-UniRule"/>
</dbReference>
<dbReference type="CDD" id="cd06223">
    <property type="entry name" value="PRTases_typeI"/>
    <property type="match status" value="1"/>
</dbReference>
<dbReference type="FunFam" id="3.40.50.2020:FF:000020">
    <property type="entry name" value="Bifunctional protein PyrR"/>
    <property type="match status" value="1"/>
</dbReference>
<dbReference type="Gene3D" id="3.40.50.2020">
    <property type="match status" value="1"/>
</dbReference>
<dbReference type="HAMAP" id="MF_01219">
    <property type="entry name" value="PyrR"/>
    <property type="match status" value="1"/>
</dbReference>
<dbReference type="InterPro" id="IPR000836">
    <property type="entry name" value="PRibTrfase_dom"/>
</dbReference>
<dbReference type="InterPro" id="IPR029057">
    <property type="entry name" value="PRTase-like"/>
</dbReference>
<dbReference type="InterPro" id="IPR023050">
    <property type="entry name" value="PyrR"/>
</dbReference>
<dbReference type="InterPro" id="IPR050137">
    <property type="entry name" value="PyrR_bifunctional"/>
</dbReference>
<dbReference type="NCBIfam" id="NF003547">
    <property type="entry name" value="PRK05205.1-3"/>
    <property type="match status" value="1"/>
</dbReference>
<dbReference type="NCBIfam" id="NF003549">
    <property type="entry name" value="PRK05205.1-5"/>
    <property type="match status" value="1"/>
</dbReference>
<dbReference type="PANTHER" id="PTHR11608">
    <property type="entry name" value="BIFUNCTIONAL PROTEIN PYRR"/>
    <property type="match status" value="1"/>
</dbReference>
<dbReference type="PANTHER" id="PTHR11608:SF0">
    <property type="entry name" value="BIFUNCTIONAL PROTEIN PYRR"/>
    <property type="match status" value="1"/>
</dbReference>
<dbReference type="Pfam" id="PF00156">
    <property type="entry name" value="Pribosyltran"/>
    <property type="match status" value="1"/>
</dbReference>
<dbReference type="SUPFAM" id="SSF53271">
    <property type="entry name" value="PRTase-like"/>
    <property type="match status" value="1"/>
</dbReference>
<reference key="1">
    <citation type="journal article" date="2003" name="Nucleic Acids Res.">
        <title>The complete genome sequence and analysis of Corynebacterium diphtheriae NCTC13129.</title>
        <authorList>
            <person name="Cerdeno-Tarraga A.-M."/>
            <person name="Efstratiou A."/>
            <person name="Dover L.G."/>
            <person name="Holden M.T.G."/>
            <person name="Pallen M.J."/>
            <person name="Bentley S.D."/>
            <person name="Besra G.S."/>
            <person name="Churcher C.M."/>
            <person name="James K.D."/>
            <person name="De Zoysa A."/>
            <person name="Chillingworth T."/>
            <person name="Cronin A."/>
            <person name="Dowd L."/>
            <person name="Feltwell T."/>
            <person name="Hamlin N."/>
            <person name="Holroyd S."/>
            <person name="Jagels K."/>
            <person name="Moule S."/>
            <person name="Quail M.A."/>
            <person name="Rabbinowitsch E."/>
            <person name="Rutherford K.M."/>
            <person name="Thomson N.R."/>
            <person name="Unwin L."/>
            <person name="Whitehead S."/>
            <person name="Barrell B.G."/>
            <person name="Parkhill J."/>
        </authorList>
    </citation>
    <scope>NUCLEOTIDE SEQUENCE [LARGE SCALE GENOMIC DNA]</scope>
    <source>
        <strain>ATCC 700971 / NCTC 13129 / Biotype gravis</strain>
    </source>
</reference>
<gene>
    <name evidence="1" type="primary">pyrR</name>
    <name type="ordered locus">DIP1335</name>
</gene>